<feature type="chain" id="PRO_0000074923" description="Sensor histidine kinase YxdK">
    <location>
        <begin position="1"/>
        <end position="325"/>
    </location>
</feature>
<feature type="topological domain" description="Cytoplasmic" evidence="1">
    <location>
        <begin position="1"/>
        <end position="8"/>
    </location>
</feature>
<feature type="transmembrane region" description="Helical" evidence="1">
    <location>
        <begin position="9"/>
        <end position="29"/>
    </location>
</feature>
<feature type="topological domain" description="Extracellular" evidence="1">
    <location>
        <begin position="30"/>
        <end position="33"/>
    </location>
</feature>
<feature type="transmembrane region" description="Helical" evidence="1">
    <location>
        <begin position="34"/>
        <end position="54"/>
    </location>
</feature>
<feature type="topological domain" description="Cytoplasmic" evidence="1">
    <location>
        <begin position="55"/>
        <end position="325"/>
    </location>
</feature>
<feature type="domain" description="Histidine kinase" evidence="2">
    <location>
        <begin position="118"/>
        <end position="325"/>
    </location>
</feature>
<feature type="modified residue" description="Phosphohistidine; by autocatalysis" evidence="2">
    <location>
        <position position="121"/>
    </location>
</feature>
<name>YXDK_BACSU</name>
<accession>P42422</accession>
<gene>
    <name type="primary">yxdK</name>
    <name type="ordered locus">BSU39650</name>
    <name type="ORF">B65E</name>
</gene>
<proteinExistence type="inferred from homology"/>
<evidence type="ECO:0000255" key="1"/>
<evidence type="ECO:0000255" key="2">
    <source>
        <dbReference type="PROSITE-ProRule" id="PRU00107"/>
    </source>
</evidence>
<evidence type="ECO:0000269" key="3">
    <source>
    </source>
</evidence>
<evidence type="ECO:0000269" key="4">
    <source>
    </source>
</evidence>
<evidence type="ECO:0000305" key="5"/>
<reference key="1">
    <citation type="journal article" date="1994" name="Microbiology">
        <title>Cloning and nucleotide sequencing of a 15 kb region of the Bacillus subtilis genome containing the iol operon.</title>
        <authorList>
            <person name="Yoshida K."/>
            <person name="Sano H."/>
            <person name="Miwa Y."/>
            <person name="Ogasawara N."/>
            <person name="Fujita Y."/>
        </authorList>
    </citation>
    <scope>NUCLEOTIDE SEQUENCE [GENOMIC DNA]</scope>
    <source>
        <strain>168 / BGSC1A1</strain>
    </source>
</reference>
<reference key="2">
    <citation type="journal article" date="1997" name="Nature">
        <title>The complete genome sequence of the Gram-positive bacterium Bacillus subtilis.</title>
        <authorList>
            <person name="Kunst F."/>
            <person name="Ogasawara N."/>
            <person name="Moszer I."/>
            <person name="Albertini A.M."/>
            <person name="Alloni G."/>
            <person name="Azevedo V."/>
            <person name="Bertero M.G."/>
            <person name="Bessieres P."/>
            <person name="Bolotin A."/>
            <person name="Borchert S."/>
            <person name="Borriss R."/>
            <person name="Boursier L."/>
            <person name="Brans A."/>
            <person name="Braun M."/>
            <person name="Brignell S.C."/>
            <person name="Bron S."/>
            <person name="Brouillet S."/>
            <person name="Bruschi C.V."/>
            <person name="Caldwell B."/>
            <person name="Capuano V."/>
            <person name="Carter N.M."/>
            <person name="Choi S.-K."/>
            <person name="Codani J.-J."/>
            <person name="Connerton I.F."/>
            <person name="Cummings N.J."/>
            <person name="Daniel R.A."/>
            <person name="Denizot F."/>
            <person name="Devine K.M."/>
            <person name="Duesterhoeft A."/>
            <person name="Ehrlich S.D."/>
            <person name="Emmerson P.T."/>
            <person name="Entian K.-D."/>
            <person name="Errington J."/>
            <person name="Fabret C."/>
            <person name="Ferrari E."/>
            <person name="Foulger D."/>
            <person name="Fritz C."/>
            <person name="Fujita M."/>
            <person name="Fujita Y."/>
            <person name="Fuma S."/>
            <person name="Galizzi A."/>
            <person name="Galleron N."/>
            <person name="Ghim S.-Y."/>
            <person name="Glaser P."/>
            <person name="Goffeau A."/>
            <person name="Golightly E.J."/>
            <person name="Grandi G."/>
            <person name="Guiseppi G."/>
            <person name="Guy B.J."/>
            <person name="Haga K."/>
            <person name="Haiech J."/>
            <person name="Harwood C.R."/>
            <person name="Henaut A."/>
            <person name="Hilbert H."/>
            <person name="Holsappel S."/>
            <person name="Hosono S."/>
            <person name="Hullo M.-F."/>
            <person name="Itaya M."/>
            <person name="Jones L.-M."/>
            <person name="Joris B."/>
            <person name="Karamata D."/>
            <person name="Kasahara Y."/>
            <person name="Klaerr-Blanchard M."/>
            <person name="Klein C."/>
            <person name="Kobayashi Y."/>
            <person name="Koetter P."/>
            <person name="Koningstein G."/>
            <person name="Krogh S."/>
            <person name="Kumano M."/>
            <person name="Kurita K."/>
            <person name="Lapidus A."/>
            <person name="Lardinois S."/>
            <person name="Lauber J."/>
            <person name="Lazarevic V."/>
            <person name="Lee S.-M."/>
            <person name="Levine A."/>
            <person name="Liu H."/>
            <person name="Masuda S."/>
            <person name="Mauel C."/>
            <person name="Medigue C."/>
            <person name="Medina N."/>
            <person name="Mellado R.P."/>
            <person name="Mizuno M."/>
            <person name="Moestl D."/>
            <person name="Nakai S."/>
            <person name="Noback M."/>
            <person name="Noone D."/>
            <person name="O'Reilly M."/>
            <person name="Ogawa K."/>
            <person name="Ogiwara A."/>
            <person name="Oudega B."/>
            <person name="Park S.-H."/>
            <person name="Parro V."/>
            <person name="Pohl T.M."/>
            <person name="Portetelle D."/>
            <person name="Porwollik S."/>
            <person name="Prescott A.M."/>
            <person name="Presecan E."/>
            <person name="Pujic P."/>
            <person name="Purnelle B."/>
            <person name="Rapoport G."/>
            <person name="Rey M."/>
            <person name="Reynolds S."/>
            <person name="Rieger M."/>
            <person name="Rivolta C."/>
            <person name="Rocha E."/>
            <person name="Roche B."/>
            <person name="Rose M."/>
            <person name="Sadaie Y."/>
            <person name="Sato T."/>
            <person name="Scanlan E."/>
            <person name="Schleich S."/>
            <person name="Schroeter R."/>
            <person name="Scoffone F."/>
            <person name="Sekiguchi J."/>
            <person name="Sekowska A."/>
            <person name="Seror S.J."/>
            <person name="Serror P."/>
            <person name="Shin B.-S."/>
            <person name="Soldo B."/>
            <person name="Sorokin A."/>
            <person name="Tacconi E."/>
            <person name="Takagi T."/>
            <person name="Takahashi H."/>
            <person name="Takemaru K."/>
            <person name="Takeuchi M."/>
            <person name="Tamakoshi A."/>
            <person name="Tanaka T."/>
            <person name="Terpstra P."/>
            <person name="Tognoni A."/>
            <person name="Tosato V."/>
            <person name="Uchiyama S."/>
            <person name="Vandenbol M."/>
            <person name="Vannier F."/>
            <person name="Vassarotti A."/>
            <person name="Viari A."/>
            <person name="Wambutt R."/>
            <person name="Wedler E."/>
            <person name="Wedler H."/>
            <person name="Weitzenegger T."/>
            <person name="Winters P."/>
            <person name="Wipat A."/>
            <person name="Yamamoto H."/>
            <person name="Yamane K."/>
            <person name="Yasumoto K."/>
            <person name="Yata K."/>
            <person name="Yoshida K."/>
            <person name="Yoshikawa H.-F."/>
            <person name="Zumstein E."/>
            <person name="Yoshikawa H."/>
            <person name="Danchin A."/>
        </authorList>
    </citation>
    <scope>NUCLEOTIDE SEQUENCE [LARGE SCALE GENOMIC DNA]</scope>
    <source>
        <strain>168</strain>
    </source>
</reference>
<reference key="3">
    <citation type="journal article" date="1995" name="DNA Res.">
        <title>Cloning and sequencing of a 23-kb region of the Bacillus subtilis genome between the iol and hut operons.</title>
        <authorList>
            <person name="Yoshida K."/>
            <person name="Fujimyra M."/>
            <person name="Yanai N."/>
            <person name="Fujita Y."/>
        </authorList>
    </citation>
    <scope>NUCLEOTIDE SEQUENCE [GENOMIC DNA] OF 108-325</scope>
    <source>
        <strain>168 / BGSC1A1</strain>
    </source>
</reference>
<reference key="4">
    <citation type="journal article" date="2001" name="J. Bacteriol.">
        <title>Comprehensive DNA microarray analysis of Bacillus subtilis two-component regulatory systems.</title>
        <authorList>
            <person name="Kobayashi K."/>
            <person name="Ogura M."/>
            <person name="Yamaguchi H."/>
            <person name="Yoshida K."/>
            <person name="Ogasawara N."/>
            <person name="Tanaka T."/>
            <person name="Fujita Y."/>
        </authorList>
    </citation>
    <scope>FUNCTION</scope>
</reference>
<reference key="5">
    <citation type="journal article" date="2005" name="Microbiology">
        <title>Cationic antimicrobial peptides elicit a complex stress response in Bacillus subtilis that involves ECF-type sigma factors and two-component signal transduction systems.</title>
        <authorList>
            <person name="Pietiaeinen M."/>
            <person name="Gardemeister M."/>
            <person name="Mecklin M."/>
            <person name="Leskelae S."/>
            <person name="Sarvas M."/>
            <person name="Kontinen V.P."/>
        </authorList>
    </citation>
    <scope>FUNCTION</scope>
    <source>
        <strain>168</strain>
    </source>
</reference>
<protein>
    <recommendedName>
        <fullName>Sensor histidine kinase YxdK</fullName>
        <ecNumber>2.7.13.3</ecNumber>
    </recommendedName>
</protein>
<organism>
    <name type="scientific">Bacillus subtilis (strain 168)</name>
    <dbReference type="NCBI Taxonomy" id="224308"/>
    <lineage>
        <taxon>Bacteria</taxon>
        <taxon>Bacillati</taxon>
        <taxon>Bacillota</taxon>
        <taxon>Bacilli</taxon>
        <taxon>Bacillales</taxon>
        <taxon>Bacillaceae</taxon>
        <taxon>Bacillus</taxon>
    </lineage>
</organism>
<dbReference type="EC" id="2.7.13.3"/>
<dbReference type="EMBL" id="D14399">
    <property type="protein sequence ID" value="BAA03301.1"/>
    <property type="molecule type" value="Genomic_DNA"/>
</dbReference>
<dbReference type="EMBL" id="AL009126">
    <property type="protein sequence ID" value="CAB16001.1"/>
    <property type="molecule type" value="Genomic_DNA"/>
</dbReference>
<dbReference type="EMBL" id="D45912">
    <property type="protein sequence ID" value="BAA08314.1"/>
    <property type="molecule type" value="Genomic_DNA"/>
</dbReference>
<dbReference type="PIR" id="H70073">
    <property type="entry name" value="H70073"/>
</dbReference>
<dbReference type="RefSeq" id="WP_003243885.1">
    <property type="nucleotide sequence ID" value="NZ_OZ025638.1"/>
</dbReference>
<dbReference type="SMR" id="P42422"/>
<dbReference type="FunCoup" id="P42422">
    <property type="interactions" value="328"/>
</dbReference>
<dbReference type="STRING" id="224308.BSU39650"/>
<dbReference type="PaxDb" id="224308-BSU39650"/>
<dbReference type="DNASU" id="937487"/>
<dbReference type="EnsemblBacteria" id="CAB16001">
    <property type="protein sequence ID" value="CAB16001"/>
    <property type="gene ID" value="BSU_39650"/>
</dbReference>
<dbReference type="GeneID" id="937487"/>
<dbReference type="KEGG" id="bsu:BSU39650"/>
<dbReference type="PATRIC" id="fig|224308.179.peg.4290"/>
<dbReference type="eggNOG" id="COG2205">
    <property type="taxonomic scope" value="Bacteria"/>
</dbReference>
<dbReference type="InParanoid" id="P42422"/>
<dbReference type="OrthoDB" id="9780487at2"/>
<dbReference type="PhylomeDB" id="P42422"/>
<dbReference type="BioCyc" id="BSUB:BSU39650-MONOMER"/>
<dbReference type="Proteomes" id="UP000001570">
    <property type="component" value="Chromosome"/>
</dbReference>
<dbReference type="GO" id="GO:0005886">
    <property type="term" value="C:plasma membrane"/>
    <property type="evidence" value="ECO:0007669"/>
    <property type="project" value="UniProtKB-SubCell"/>
</dbReference>
<dbReference type="GO" id="GO:0005524">
    <property type="term" value="F:ATP binding"/>
    <property type="evidence" value="ECO:0007669"/>
    <property type="project" value="UniProtKB-KW"/>
</dbReference>
<dbReference type="GO" id="GO:0004673">
    <property type="term" value="F:protein histidine kinase activity"/>
    <property type="evidence" value="ECO:0007669"/>
    <property type="project" value="UniProtKB-EC"/>
</dbReference>
<dbReference type="GO" id="GO:0000160">
    <property type="term" value="P:phosphorelay signal transduction system"/>
    <property type="evidence" value="ECO:0007669"/>
    <property type="project" value="UniProtKB-KW"/>
</dbReference>
<dbReference type="CDD" id="cd16948">
    <property type="entry name" value="HATPase_BceS-YxdK-YvcQ-like"/>
    <property type="match status" value="1"/>
</dbReference>
<dbReference type="Gene3D" id="3.30.565.10">
    <property type="entry name" value="Histidine kinase-like ATPase, C-terminal domain"/>
    <property type="match status" value="1"/>
</dbReference>
<dbReference type="InterPro" id="IPR050351">
    <property type="entry name" value="2-comp_sensor_kinase"/>
</dbReference>
<dbReference type="InterPro" id="IPR036890">
    <property type="entry name" value="HATPase_C_sf"/>
</dbReference>
<dbReference type="InterPro" id="IPR005467">
    <property type="entry name" value="His_kinase_dom"/>
</dbReference>
<dbReference type="InterPro" id="IPR004358">
    <property type="entry name" value="Sig_transdc_His_kin-like_C"/>
</dbReference>
<dbReference type="PANTHER" id="PTHR45453:SF2">
    <property type="entry name" value="HISTIDINE KINASE"/>
    <property type="match status" value="1"/>
</dbReference>
<dbReference type="PANTHER" id="PTHR45453">
    <property type="entry name" value="PHOSPHATE REGULON SENSOR PROTEIN PHOR"/>
    <property type="match status" value="1"/>
</dbReference>
<dbReference type="Pfam" id="PF02518">
    <property type="entry name" value="HATPase_c"/>
    <property type="match status" value="1"/>
</dbReference>
<dbReference type="PRINTS" id="PR00344">
    <property type="entry name" value="BCTRLSENSOR"/>
</dbReference>
<dbReference type="SMART" id="SM00387">
    <property type="entry name" value="HATPase_c"/>
    <property type="match status" value="1"/>
</dbReference>
<dbReference type="SUPFAM" id="SSF55874">
    <property type="entry name" value="ATPase domain of HSP90 chaperone/DNA topoisomerase II/histidine kinase"/>
    <property type="match status" value="1"/>
</dbReference>
<dbReference type="PROSITE" id="PS50109">
    <property type="entry name" value="HIS_KIN"/>
    <property type="match status" value="1"/>
</dbReference>
<comment type="function">
    <text evidence="3 4">Probable member of the two-component regulatory system YxdK/YxdJ. May activate YxdJ in response to the antibacterial protein LL-37.</text>
</comment>
<comment type="catalytic activity">
    <reaction>
        <text>ATP + protein L-histidine = ADP + protein N-phospho-L-histidine.</text>
        <dbReference type="EC" id="2.7.13.3"/>
    </reaction>
</comment>
<comment type="subcellular location">
    <subcellularLocation>
        <location evidence="5">Cell membrane</location>
        <topology evidence="5">Multi-pass membrane protein</topology>
    </subcellularLocation>
</comment>
<keyword id="KW-0067">ATP-binding</keyword>
<keyword id="KW-1003">Cell membrane</keyword>
<keyword id="KW-0418">Kinase</keyword>
<keyword id="KW-0472">Membrane</keyword>
<keyword id="KW-0547">Nucleotide-binding</keyword>
<keyword id="KW-0597">Phosphoprotein</keyword>
<keyword id="KW-1185">Reference proteome</keyword>
<keyword id="KW-0808">Transferase</keyword>
<keyword id="KW-0812">Transmembrane</keyword>
<keyword id="KW-1133">Transmembrane helix</keyword>
<keyword id="KW-0902">Two-component regulatory system</keyword>
<sequence>MKLFLRSHAVLILLFLLQGLFVFFYYWFAGLHSFSHLFYILGVQLLILAGYLAYRWYKDRGVYHWLSSGQEGTDIPYLGSSVFCSELYEKQMELIRLQHQKLHETEAKLDARVTYMNQWVHQVKTPLSVINLIIQEEDEPVFEQIKKEVRQIEFGLETLLYSSRLDLFERDFKIEAVSLSELLQSVIQSYKRFFIQYRVYPKMNVCDDHQIYTDAKWLKFAIGQVVTNAVKYSAGKSDRLELNVFCDEDRTVLEVKDYGVGIPSQDIKRVFDPYYTGENGRRFQESTGIGLHLVKEITDKLNHTVDISSSPGEGTSVRFSFLTKM</sequence>